<sequence>MTKPFSVVLASLLAITSTVSPLASAQQSQPLDRIAAIVDEDVVLQSELDRAVRNVKSQYAGRENQLPPDDVLQRQVLERLVLVKLQVSRADGNGIRVSDEELNRAIASIAQQNGTTVDGLRQKLAADGMGYADFRASVRDEIIVQRLRQSFAQSRISVSEGEVDTALAQQAATGSQYHLAHILIGLPEGANAEQIATGQKKVDGVKALIDKGELDFSAAAVRYSDSPNALEGGDLGWRSLDEIPNAFAQLIRDMQPGQVAGPLRGPSGFQLLKLVEMRDANAGGEKKMVTEYHARHILVRIGDNQTEAQAKAKIDTIRARIVGGADFQATAKESSEDTNSRGQGGDLGWFPADAFGPDFGKQVESLTDGAVSEPFRTQAGWHIVQRVGSRQTDVSAENQRAQVRETIGRRKLEEEYNRYLQELRGEAYVSYRTGDRADDNATAAPAKSPDPAAPSPPPAKPTR</sequence>
<comment type="function">
    <text evidence="1">Chaperone involved in the correct folding and assembly of outer membrane proteins. Recognizes specific patterns of aromatic residues and the orientation of their side chains, which are found more frequently in integral outer membrane proteins. May act in both early periplasmic and late outer membrane-associated steps of protein maturation.</text>
</comment>
<comment type="catalytic activity">
    <reaction evidence="1">
        <text>[protein]-peptidylproline (omega=180) = [protein]-peptidylproline (omega=0)</text>
        <dbReference type="Rhea" id="RHEA:16237"/>
        <dbReference type="Rhea" id="RHEA-COMP:10747"/>
        <dbReference type="Rhea" id="RHEA-COMP:10748"/>
        <dbReference type="ChEBI" id="CHEBI:83833"/>
        <dbReference type="ChEBI" id="CHEBI:83834"/>
        <dbReference type="EC" id="5.2.1.8"/>
    </reaction>
</comment>
<comment type="subcellular location">
    <subcellularLocation>
        <location evidence="1">Periplasm</location>
    </subcellularLocation>
    <text evidence="1">Is capable of associating with the outer membrane.</text>
</comment>
<comment type="domain">
    <text evidence="1">The PPIase activity resides only in the second parvulin domain. The N-terminal region and the C-terminal tail are necessary and sufficient for the chaperone activity of SurA. The PPIase activity is dispensable for SurA to function as a chaperone. The N-terminal region and the C-terminal tail are also required for porin recognition.</text>
</comment>
<protein>
    <recommendedName>
        <fullName evidence="1">Chaperone SurA</fullName>
    </recommendedName>
    <alternativeName>
        <fullName evidence="1">Peptidyl-prolyl cis-trans isomerase SurA</fullName>
        <shortName evidence="1">PPIase SurA</shortName>
        <ecNumber evidence="1">5.2.1.8</ecNumber>
    </alternativeName>
    <alternativeName>
        <fullName evidence="1">Rotamase SurA</fullName>
    </alternativeName>
</protein>
<accession>Q8PP23</accession>
<name>SURA_XANAC</name>
<dbReference type="EC" id="5.2.1.8" evidence="1"/>
<dbReference type="EMBL" id="AE008923">
    <property type="protein sequence ID" value="AAM35753.1"/>
    <property type="molecule type" value="Genomic_DNA"/>
</dbReference>
<dbReference type="RefSeq" id="WP_003487453.1">
    <property type="nucleotide sequence ID" value="NC_003919.1"/>
</dbReference>
<dbReference type="SMR" id="Q8PP23"/>
<dbReference type="KEGG" id="xac:XAC0865"/>
<dbReference type="eggNOG" id="COG0760">
    <property type="taxonomic scope" value="Bacteria"/>
</dbReference>
<dbReference type="HOGENOM" id="CLU_034646_11_0_6"/>
<dbReference type="Proteomes" id="UP000000576">
    <property type="component" value="Chromosome"/>
</dbReference>
<dbReference type="GO" id="GO:0030288">
    <property type="term" value="C:outer membrane-bounded periplasmic space"/>
    <property type="evidence" value="ECO:0007669"/>
    <property type="project" value="InterPro"/>
</dbReference>
<dbReference type="GO" id="GO:0042277">
    <property type="term" value="F:peptide binding"/>
    <property type="evidence" value="ECO:0007669"/>
    <property type="project" value="InterPro"/>
</dbReference>
<dbReference type="GO" id="GO:0003755">
    <property type="term" value="F:peptidyl-prolyl cis-trans isomerase activity"/>
    <property type="evidence" value="ECO:0007669"/>
    <property type="project" value="UniProtKB-UniRule"/>
</dbReference>
<dbReference type="GO" id="GO:0051082">
    <property type="term" value="F:unfolded protein binding"/>
    <property type="evidence" value="ECO:0007669"/>
    <property type="project" value="UniProtKB-UniRule"/>
</dbReference>
<dbReference type="GO" id="GO:0043165">
    <property type="term" value="P:Gram-negative-bacterium-type cell outer membrane assembly"/>
    <property type="evidence" value="ECO:0007669"/>
    <property type="project" value="InterPro"/>
</dbReference>
<dbReference type="GO" id="GO:0006457">
    <property type="term" value="P:protein folding"/>
    <property type="evidence" value="ECO:0007669"/>
    <property type="project" value="UniProtKB-UniRule"/>
</dbReference>
<dbReference type="GO" id="GO:0050821">
    <property type="term" value="P:protein stabilization"/>
    <property type="evidence" value="ECO:0007669"/>
    <property type="project" value="InterPro"/>
</dbReference>
<dbReference type="Gene3D" id="3.10.50.40">
    <property type="match status" value="2"/>
</dbReference>
<dbReference type="Gene3D" id="1.10.4030.10">
    <property type="entry name" value="Porin chaperone SurA, peptide-binding domain"/>
    <property type="match status" value="1"/>
</dbReference>
<dbReference type="HAMAP" id="MF_01183">
    <property type="entry name" value="Chaperone_SurA"/>
    <property type="match status" value="1"/>
</dbReference>
<dbReference type="InterPro" id="IPR050280">
    <property type="entry name" value="OMP_Chaperone_SurA"/>
</dbReference>
<dbReference type="InterPro" id="IPR046357">
    <property type="entry name" value="PPIase_dom_sf"/>
</dbReference>
<dbReference type="InterPro" id="IPR000297">
    <property type="entry name" value="PPIase_PpiC"/>
</dbReference>
<dbReference type="InterPro" id="IPR023034">
    <property type="entry name" value="PPIase_SurA"/>
</dbReference>
<dbReference type="InterPro" id="IPR015391">
    <property type="entry name" value="SurA_N"/>
</dbReference>
<dbReference type="InterPro" id="IPR027304">
    <property type="entry name" value="Trigger_fact/SurA_dom_sf"/>
</dbReference>
<dbReference type="PANTHER" id="PTHR47637">
    <property type="entry name" value="CHAPERONE SURA"/>
    <property type="match status" value="1"/>
</dbReference>
<dbReference type="PANTHER" id="PTHR47637:SF1">
    <property type="entry name" value="CHAPERONE SURA"/>
    <property type="match status" value="1"/>
</dbReference>
<dbReference type="Pfam" id="PF00639">
    <property type="entry name" value="Rotamase"/>
    <property type="match status" value="1"/>
</dbReference>
<dbReference type="Pfam" id="PF13616">
    <property type="entry name" value="Rotamase_3"/>
    <property type="match status" value="1"/>
</dbReference>
<dbReference type="Pfam" id="PF09312">
    <property type="entry name" value="SurA_N"/>
    <property type="match status" value="1"/>
</dbReference>
<dbReference type="SUPFAM" id="SSF54534">
    <property type="entry name" value="FKBP-like"/>
    <property type="match status" value="2"/>
</dbReference>
<dbReference type="SUPFAM" id="SSF109998">
    <property type="entry name" value="Triger factor/SurA peptide-binding domain-like"/>
    <property type="match status" value="1"/>
</dbReference>
<dbReference type="PROSITE" id="PS50198">
    <property type="entry name" value="PPIC_PPIASE_2"/>
    <property type="match status" value="2"/>
</dbReference>
<reference key="1">
    <citation type="journal article" date="2002" name="Nature">
        <title>Comparison of the genomes of two Xanthomonas pathogens with differing host specificities.</title>
        <authorList>
            <person name="da Silva A.C.R."/>
            <person name="Ferro J.A."/>
            <person name="Reinach F.C."/>
            <person name="Farah C.S."/>
            <person name="Furlan L.R."/>
            <person name="Quaggio R.B."/>
            <person name="Monteiro-Vitorello C.B."/>
            <person name="Van Sluys M.A."/>
            <person name="Almeida N.F. Jr."/>
            <person name="Alves L.M.C."/>
            <person name="do Amaral A.M."/>
            <person name="Bertolini M.C."/>
            <person name="Camargo L.E.A."/>
            <person name="Camarotte G."/>
            <person name="Cannavan F."/>
            <person name="Cardozo J."/>
            <person name="Chambergo F."/>
            <person name="Ciapina L.P."/>
            <person name="Cicarelli R.M.B."/>
            <person name="Coutinho L.L."/>
            <person name="Cursino-Santos J.R."/>
            <person name="El-Dorry H."/>
            <person name="Faria J.B."/>
            <person name="Ferreira A.J.S."/>
            <person name="Ferreira R.C.C."/>
            <person name="Ferro M.I.T."/>
            <person name="Formighieri E.F."/>
            <person name="Franco M.C."/>
            <person name="Greggio C.C."/>
            <person name="Gruber A."/>
            <person name="Katsuyama A.M."/>
            <person name="Kishi L.T."/>
            <person name="Leite R.P."/>
            <person name="Lemos E.G.M."/>
            <person name="Lemos M.V.F."/>
            <person name="Locali E.C."/>
            <person name="Machado M.A."/>
            <person name="Madeira A.M.B.N."/>
            <person name="Martinez-Rossi N.M."/>
            <person name="Martins E.C."/>
            <person name="Meidanis J."/>
            <person name="Menck C.F.M."/>
            <person name="Miyaki C.Y."/>
            <person name="Moon D.H."/>
            <person name="Moreira L.M."/>
            <person name="Novo M.T.M."/>
            <person name="Okura V.K."/>
            <person name="Oliveira M.C."/>
            <person name="Oliveira V.R."/>
            <person name="Pereira H.A."/>
            <person name="Rossi A."/>
            <person name="Sena J.A.D."/>
            <person name="Silva C."/>
            <person name="de Souza R.F."/>
            <person name="Spinola L.A.F."/>
            <person name="Takita M.A."/>
            <person name="Tamura R.E."/>
            <person name="Teixeira E.C."/>
            <person name="Tezza R.I.D."/>
            <person name="Trindade dos Santos M."/>
            <person name="Truffi D."/>
            <person name="Tsai S.M."/>
            <person name="White F.F."/>
            <person name="Setubal J.C."/>
            <person name="Kitajima J.P."/>
        </authorList>
    </citation>
    <scope>NUCLEOTIDE SEQUENCE [LARGE SCALE GENOMIC DNA]</scope>
    <source>
        <strain>306</strain>
    </source>
</reference>
<keyword id="KW-0143">Chaperone</keyword>
<keyword id="KW-0413">Isomerase</keyword>
<keyword id="KW-0574">Periplasm</keyword>
<keyword id="KW-0677">Repeat</keyword>
<keyword id="KW-0697">Rotamase</keyword>
<keyword id="KW-0732">Signal</keyword>
<gene>
    <name evidence="1" type="primary">surA</name>
    <name type="ordered locus">XAC0865</name>
</gene>
<feature type="signal peptide" evidence="1">
    <location>
        <begin position="1"/>
        <end position="25"/>
    </location>
</feature>
<feature type="chain" id="PRO_0000270048" description="Chaperone SurA">
    <location>
        <begin position="26"/>
        <end position="463"/>
    </location>
</feature>
<feature type="domain" description="PpiC 1" evidence="1">
    <location>
        <begin position="174"/>
        <end position="276"/>
    </location>
</feature>
<feature type="domain" description="PpiC 2" evidence="1">
    <location>
        <begin position="289"/>
        <end position="388"/>
    </location>
</feature>
<feature type="region of interest" description="Disordered" evidence="2">
    <location>
        <begin position="329"/>
        <end position="348"/>
    </location>
</feature>
<feature type="region of interest" description="Disordered" evidence="2">
    <location>
        <begin position="431"/>
        <end position="463"/>
    </location>
</feature>
<feature type="compositionally biased region" description="Low complexity" evidence="2">
    <location>
        <begin position="441"/>
        <end position="450"/>
    </location>
</feature>
<feature type="compositionally biased region" description="Pro residues" evidence="2">
    <location>
        <begin position="451"/>
        <end position="463"/>
    </location>
</feature>
<proteinExistence type="inferred from homology"/>
<evidence type="ECO:0000255" key="1">
    <source>
        <dbReference type="HAMAP-Rule" id="MF_01183"/>
    </source>
</evidence>
<evidence type="ECO:0000256" key="2">
    <source>
        <dbReference type="SAM" id="MobiDB-lite"/>
    </source>
</evidence>
<organism>
    <name type="scientific">Xanthomonas axonopodis pv. citri (strain 306)</name>
    <dbReference type="NCBI Taxonomy" id="190486"/>
    <lineage>
        <taxon>Bacteria</taxon>
        <taxon>Pseudomonadati</taxon>
        <taxon>Pseudomonadota</taxon>
        <taxon>Gammaproteobacteria</taxon>
        <taxon>Lysobacterales</taxon>
        <taxon>Lysobacteraceae</taxon>
        <taxon>Xanthomonas</taxon>
    </lineage>
</organism>